<sequence>MEYFNVGKIVNTQGLQGEMRVLSVSDFTEERFQKGARLALFDDKDRFVQEVEIASHRKHKQFDIIKFKGMYHINAIEQFKGCSLKIAKEHQGKLAEGEFYYHQIIGLEVYEKDQLVGQIKEILQPGANDVWVVKRQSKRDLLLPYIPSVVLGVDIEKGRVDVEIMEGLDDED</sequence>
<feature type="chain" id="PRO_1000201814" description="Ribosome maturation factor RimM">
    <location>
        <begin position="1"/>
        <end position="172"/>
    </location>
</feature>
<feature type="domain" description="PRC barrel" evidence="1">
    <location>
        <begin position="95"/>
        <end position="168"/>
    </location>
</feature>
<keyword id="KW-0143">Chaperone</keyword>
<keyword id="KW-0963">Cytoplasm</keyword>
<keyword id="KW-0690">Ribosome biogenesis</keyword>
<keyword id="KW-0698">rRNA processing</keyword>
<gene>
    <name evidence="1" type="primary">rimM</name>
    <name type="ordered locus">SZO_08590</name>
</gene>
<dbReference type="EMBL" id="FM204884">
    <property type="protein sequence ID" value="CAW99063.1"/>
    <property type="molecule type" value="Genomic_DNA"/>
</dbReference>
<dbReference type="SMR" id="C0MEI2"/>
<dbReference type="KEGG" id="seq:SZO_08590"/>
<dbReference type="eggNOG" id="COG0806">
    <property type="taxonomic scope" value="Bacteria"/>
</dbReference>
<dbReference type="HOGENOM" id="CLU_077636_3_1_9"/>
<dbReference type="Proteomes" id="UP000001368">
    <property type="component" value="Chromosome"/>
</dbReference>
<dbReference type="GO" id="GO:0005737">
    <property type="term" value="C:cytoplasm"/>
    <property type="evidence" value="ECO:0007669"/>
    <property type="project" value="UniProtKB-SubCell"/>
</dbReference>
<dbReference type="GO" id="GO:0005840">
    <property type="term" value="C:ribosome"/>
    <property type="evidence" value="ECO:0007669"/>
    <property type="project" value="InterPro"/>
</dbReference>
<dbReference type="GO" id="GO:0043022">
    <property type="term" value="F:ribosome binding"/>
    <property type="evidence" value="ECO:0007669"/>
    <property type="project" value="InterPro"/>
</dbReference>
<dbReference type="GO" id="GO:0042274">
    <property type="term" value="P:ribosomal small subunit biogenesis"/>
    <property type="evidence" value="ECO:0007669"/>
    <property type="project" value="UniProtKB-UniRule"/>
</dbReference>
<dbReference type="GO" id="GO:0006364">
    <property type="term" value="P:rRNA processing"/>
    <property type="evidence" value="ECO:0007669"/>
    <property type="project" value="UniProtKB-UniRule"/>
</dbReference>
<dbReference type="Gene3D" id="2.30.30.240">
    <property type="entry name" value="PRC-barrel domain"/>
    <property type="match status" value="1"/>
</dbReference>
<dbReference type="Gene3D" id="2.40.30.60">
    <property type="entry name" value="RimM"/>
    <property type="match status" value="1"/>
</dbReference>
<dbReference type="HAMAP" id="MF_00014">
    <property type="entry name" value="Ribosome_mat_RimM"/>
    <property type="match status" value="1"/>
</dbReference>
<dbReference type="InterPro" id="IPR027275">
    <property type="entry name" value="PRC-brl_dom"/>
</dbReference>
<dbReference type="InterPro" id="IPR011033">
    <property type="entry name" value="PRC_barrel-like_sf"/>
</dbReference>
<dbReference type="InterPro" id="IPR011961">
    <property type="entry name" value="RimM"/>
</dbReference>
<dbReference type="InterPro" id="IPR002676">
    <property type="entry name" value="RimM_N"/>
</dbReference>
<dbReference type="InterPro" id="IPR036976">
    <property type="entry name" value="RimM_N_sf"/>
</dbReference>
<dbReference type="InterPro" id="IPR009000">
    <property type="entry name" value="Transl_B-barrel_sf"/>
</dbReference>
<dbReference type="NCBIfam" id="TIGR02273">
    <property type="entry name" value="16S_RimM"/>
    <property type="match status" value="1"/>
</dbReference>
<dbReference type="PANTHER" id="PTHR33692">
    <property type="entry name" value="RIBOSOME MATURATION FACTOR RIMM"/>
    <property type="match status" value="1"/>
</dbReference>
<dbReference type="PANTHER" id="PTHR33692:SF1">
    <property type="entry name" value="RIBOSOME MATURATION FACTOR RIMM"/>
    <property type="match status" value="1"/>
</dbReference>
<dbReference type="Pfam" id="PF05239">
    <property type="entry name" value="PRC"/>
    <property type="match status" value="1"/>
</dbReference>
<dbReference type="Pfam" id="PF01782">
    <property type="entry name" value="RimM"/>
    <property type="match status" value="1"/>
</dbReference>
<dbReference type="SUPFAM" id="SSF50346">
    <property type="entry name" value="PRC-barrel domain"/>
    <property type="match status" value="1"/>
</dbReference>
<dbReference type="SUPFAM" id="SSF50447">
    <property type="entry name" value="Translation proteins"/>
    <property type="match status" value="1"/>
</dbReference>
<organism>
    <name type="scientific">Streptococcus equi subsp. zooepidemicus (strain H70)</name>
    <dbReference type="NCBI Taxonomy" id="553483"/>
    <lineage>
        <taxon>Bacteria</taxon>
        <taxon>Bacillati</taxon>
        <taxon>Bacillota</taxon>
        <taxon>Bacilli</taxon>
        <taxon>Lactobacillales</taxon>
        <taxon>Streptococcaceae</taxon>
        <taxon>Streptococcus</taxon>
    </lineage>
</organism>
<accession>C0MEI2</accession>
<reference key="1">
    <citation type="journal article" date="2009" name="PLoS Pathog.">
        <title>Genomic evidence for the evolution of Streptococcus equi: host restriction, increased virulence, and genetic exchange with human pathogens.</title>
        <authorList>
            <person name="Holden M.T.G."/>
            <person name="Heather Z."/>
            <person name="Paillot R."/>
            <person name="Steward K.F."/>
            <person name="Webb K."/>
            <person name="Ainslie F."/>
            <person name="Jourdan T."/>
            <person name="Bason N.C."/>
            <person name="Holroyd N.E."/>
            <person name="Mungall K."/>
            <person name="Quail M.A."/>
            <person name="Sanders M."/>
            <person name="Simmonds M."/>
            <person name="Willey D."/>
            <person name="Brooks K."/>
            <person name="Aanensen D.M."/>
            <person name="Spratt B.G."/>
            <person name="Jolley K.A."/>
            <person name="Maiden M.C.J."/>
            <person name="Kehoe M."/>
            <person name="Chanter N."/>
            <person name="Bentley S.D."/>
            <person name="Robinson C."/>
            <person name="Maskell D.J."/>
            <person name="Parkhill J."/>
            <person name="Waller A.S."/>
        </authorList>
    </citation>
    <scope>NUCLEOTIDE SEQUENCE [LARGE SCALE GENOMIC DNA]</scope>
    <source>
        <strain>H70</strain>
    </source>
</reference>
<evidence type="ECO:0000255" key="1">
    <source>
        <dbReference type="HAMAP-Rule" id="MF_00014"/>
    </source>
</evidence>
<comment type="function">
    <text evidence="1">An accessory protein needed during the final step in the assembly of 30S ribosomal subunit, possibly for assembly of the head region. Essential for efficient processing of 16S rRNA. May be needed both before and after RbfA during the maturation of 16S rRNA. It has affinity for free ribosomal 30S subunits but not for 70S ribosomes.</text>
</comment>
<comment type="subunit">
    <text evidence="1">Binds ribosomal protein uS19.</text>
</comment>
<comment type="subcellular location">
    <subcellularLocation>
        <location evidence="1">Cytoplasm</location>
    </subcellularLocation>
</comment>
<comment type="domain">
    <text evidence="1">The PRC barrel domain binds ribosomal protein uS19.</text>
</comment>
<comment type="similarity">
    <text evidence="1">Belongs to the RimM family.</text>
</comment>
<protein>
    <recommendedName>
        <fullName evidence="1">Ribosome maturation factor RimM</fullName>
    </recommendedName>
</protein>
<proteinExistence type="inferred from homology"/>
<name>RIMM_STRS7</name>